<reference key="1">
    <citation type="journal article" date="2001" name="Science">
        <title>Mechanisms of evolution in Rickettsia conorii and R. prowazekii.</title>
        <authorList>
            <person name="Ogata H."/>
            <person name="Audic S."/>
            <person name="Renesto-Audiffren P."/>
            <person name="Fournier P.-E."/>
            <person name="Barbe V."/>
            <person name="Samson D."/>
            <person name="Roux V."/>
            <person name="Cossart P."/>
            <person name="Weissenbach J."/>
            <person name="Claverie J.-M."/>
            <person name="Raoult D."/>
        </authorList>
    </citation>
    <scope>NUCLEOTIDE SEQUENCE [LARGE SCALE GENOMIC DNA]</scope>
    <source>
        <strain>ATCC VR-613 / Malish 7</strain>
    </source>
</reference>
<reference key="2">
    <citation type="journal article" date="1999" name="Antimicrob. Agents Chemother.">
        <title>Characterization of mutations in the rpoB gene in naturally rifampin-resistant Rickettsia species.</title>
        <authorList>
            <person name="Drancourt M."/>
            <person name="Raoult D."/>
        </authorList>
    </citation>
    <scope>NUCLEOTIDE SEQUENCE [GENOMIC DNA] OF 1-100</scope>
    <source>
        <strain>ATCC VR-613 / Malish 7</strain>
        <strain>Moroccan</strain>
    </source>
</reference>
<organism>
    <name type="scientific">Rickettsia conorii (strain ATCC VR-613 / Malish 7)</name>
    <dbReference type="NCBI Taxonomy" id="272944"/>
    <lineage>
        <taxon>Bacteria</taxon>
        <taxon>Pseudomonadati</taxon>
        <taxon>Pseudomonadota</taxon>
        <taxon>Alphaproteobacteria</taxon>
        <taxon>Rickettsiales</taxon>
        <taxon>Rickettsiaceae</taxon>
        <taxon>Rickettsieae</taxon>
        <taxon>Rickettsia</taxon>
        <taxon>spotted fever group</taxon>
    </lineage>
</organism>
<comment type="function">
    <text evidence="1">DNA-dependent RNA polymerase catalyzes the transcription of DNA into RNA using the four ribonucleoside triphosphates as substrates.</text>
</comment>
<comment type="catalytic activity">
    <reaction evidence="1">
        <text>RNA(n) + a ribonucleoside 5'-triphosphate = RNA(n+1) + diphosphate</text>
        <dbReference type="Rhea" id="RHEA:21248"/>
        <dbReference type="Rhea" id="RHEA-COMP:14527"/>
        <dbReference type="Rhea" id="RHEA-COMP:17342"/>
        <dbReference type="ChEBI" id="CHEBI:33019"/>
        <dbReference type="ChEBI" id="CHEBI:61557"/>
        <dbReference type="ChEBI" id="CHEBI:140395"/>
        <dbReference type="EC" id="2.7.7.6"/>
    </reaction>
</comment>
<comment type="cofactor">
    <cofactor evidence="1">
        <name>Mg(2+)</name>
        <dbReference type="ChEBI" id="CHEBI:18420"/>
    </cofactor>
    <text evidence="1">Binds 1 Mg(2+) ion per subunit.</text>
</comment>
<comment type="cofactor">
    <cofactor evidence="1">
        <name>Zn(2+)</name>
        <dbReference type="ChEBI" id="CHEBI:29105"/>
    </cofactor>
    <text evidence="1">Binds 2 Zn(2+) ions per subunit.</text>
</comment>
<comment type="subunit">
    <text evidence="1">The RNAP catalytic core consists of 2 alpha, 1 beta, 1 beta' and 1 omega subunit. When a sigma factor is associated with the core the holoenzyme is formed, which can initiate transcription.</text>
</comment>
<comment type="similarity">
    <text evidence="1">Belongs to the RNA polymerase beta' chain family.</text>
</comment>
<protein>
    <recommendedName>
        <fullName evidence="1">DNA-directed RNA polymerase subunit beta'</fullName>
        <shortName evidence="1">RNAP subunit beta'</shortName>
        <ecNumber evidence="1">2.7.7.6</ecNumber>
    </recommendedName>
    <alternativeName>
        <fullName evidence="1">RNA polymerase subunit beta'</fullName>
    </alternativeName>
    <alternativeName>
        <fullName evidence="1">Transcriptase subunit beta'</fullName>
    </alternativeName>
</protein>
<sequence length="1372" mass="153245">MSVVNFYGQLSNTQQFDQIRINIASPDQVRSWSFGEVTKPETINYRTFKPEKDGLFCARIFGPVKDYECLCGKYKRMKNRGITCEKCGVEVTVSRVRRERMGHIELAAPVAHIWFLKSLPSRISTLLDMTMRDVEKILYFENYVVVDPGLSILQKGELLTEEELQKAKDKYGEDAFTASIGAEVIQQMLKELDFSKLKQELYEELQTTSSEVKKKKLVKRLKLVENFLESENKPEWMIMDVLPVIPPEIRPLVMLDGGRFATSDLNELYRRVINRNNRLKKLIESKAPDIIVRNEKRMLQEAVDALFDNGRRGRAAKNANKRPFKSLSDMLKGKQGRFRQNLLGKRVDYSGRSVIVVGPELKLHQCGLPKKMALELFKPFIYSKLELYGIATTIKAAKRMVEAEKSEVWDVLEEVIREHPVLLNRAPTLHRLGIQAFEPLLIEGKAIQLHPLVCAAFNADFDGDQMAVHIPLSIEAQLEARVFMMSTNNILSPANGRPIIVPDKDIVLGLYYLTLAFDNEVGAGMMFSDLAEMEHALYNKFITIHTKIKYRRNQLNAEGKMVPVIIDTTYGRLMVGELLPSNPNIEFKCINKQLTKKDISLVIDLVYRHCGQKATVIFADQLMKLGFKYACSSGISFGMDDMVVPESKSTHINETQLEIKEFEQQYSNGLITYGEKYNKVVDAWSRCTDRVANDMMKEIATPPVNDAPNHQKINAIYMMAISGARGSFQQIKQLGGMRGLMTKSNGQIIQTPIISNFKEGLTEFECFNSANGMRKGQIDTALKTASSGYLTRKLVDVAQDCIITEKDCGTDKGIEVKSVIEGGEVIVPLAEKILGRTAAIDIFHPVTNDLILNKGELINEAKLEQIESAGFDRIMIKSVLTCESTTGICSICYGRDLATGTLVSEGEAIGVIAAQSIGEPGTQLTMRTFHIGGAATKGAEVSSVDASYDAKVKIISRNVVINSEERKIVMSRNCELLLLDNNGNEKARHKIPYGARLLVDDGDMVIKTQKLAEWDPYTIPIITEKSGKVLFKDMVEGISIRDVTDEATGIPSKVIIESKQYSRGAELRPRIQLLDAKGEVITLSNGLEARYYLPVGAVLSVEDGVQISVGDIIARIPKESTTTKDITGGLPRVAELVEARRPKDHAVIAEIDGRVEFGKDYKSKRRIIIHPIDETMSIEYMVPKGKHVVVNEGDFVKKGDLLIDGNPVLQDILKVMGVEVLANYIVNEVQAVYRLQGVKIDDKHIEVIIRQMLQKVEVTDSGGTTLLVGEKIDRHEFDEINEKAMKNGLKPAEAQLILQGITKASLQTRSFISAASFQETTRVLTEAAIAGKVDKLRGLKENVIVGRLVPAGTGYFMDKMRKAAAKLDEENV</sequence>
<gene>
    <name evidence="1" type="primary">rpoC</name>
    <name type="ordered locus">RC0182</name>
</gene>
<keyword id="KW-0240">DNA-directed RNA polymerase</keyword>
<keyword id="KW-0460">Magnesium</keyword>
<keyword id="KW-0479">Metal-binding</keyword>
<keyword id="KW-0548">Nucleotidyltransferase</keyword>
<keyword id="KW-0804">Transcription</keyword>
<keyword id="KW-0808">Transferase</keyword>
<keyword id="KW-0862">Zinc</keyword>
<dbReference type="EC" id="2.7.7.6" evidence="1"/>
<dbReference type="EMBL" id="AE006914">
    <property type="protein sequence ID" value="AAL02720.1"/>
    <property type="molecule type" value="Genomic_DNA"/>
</dbReference>
<dbReference type="EMBL" id="AF076434">
    <property type="protein sequence ID" value="AAF22434.1"/>
    <property type="molecule type" value="Genomic_DNA"/>
</dbReference>
<dbReference type="EMBL" id="AF076435">
    <property type="protein sequence ID" value="AAF22436.1"/>
    <property type="molecule type" value="Genomic_DNA"/>
</dbReference>
<dbReference type="PIR" id="F97722">
    <property type="entry name" value="F97722"/>
</dbReference>
<dbReference type="RefSeq" id="WP_010976852.1">
    <property type="nucleotide sequence ID" value="NC_003103.1"/>
</dbReference>
<dbReference type="SMR" id="Q9RH40"/>
<dbReference type="GeneID" id="928008"/>
<dbReference type="KEGG" id="rco:RC0182"/>
<dbReference type="PATRIC" id="fig|272944.4.peg.211"/>
<dbReference type="HOGENOM" id="CLU_000524_3_1_5"/>
<dbReference type="Proteomes" id="UP000000816">
    <property type="component" value="Chromosome"/>
</dbReference>
<dbReference type="GO" id="GO:0000428">
    <property type="term" value="C:DNA-directed RNA polymerase complex"/>
    <property type="evidence" value="ECO:0007669"/>
    <property type="project" value="UniProtKB-KW"/>
</dbReference>
<dbReference type="GO" id="GO:0003677">
    <property type="term" value="F:DNA binding"/>
    <property type="evidence" value="ECO:0007669"/>
    <property type="project" value="UniProtKB-UniRule"/>
</dbReference>
<dbReference type="GO" id="GO:0003899">
    <property type="term" value="F:DNA-directed RNA polymerase activity"/>
    <property type="evidence" value="ECO:0007669"/>
    <property type="project" value="UniProtKB-UniRule"/>
</dbReference>
<dbReference type="GO" id="GO:0000287">
    <property type="term" value="F:magnesium ion binding"/>
    <property type="evidence" value="ECO:0007669"/>
    <property type="project" value="UniProtKB-UniRule"/>
</dbReference>
<dbReference type="GO" id="GO:0008270">
    <property type="term" value="F:zinc ion binding"/>
    <property type="evidence" value="ECO:0007669"/>
    <property type="project" value="UniProtKB-UniRule"/>
</dbReference>
<dbReference type="GO" id="GO:0006351">
    <property type="term" value="P:DNA-templated transcription"/>
    <property type="evidence" value="ECO:0007669"/>
    <property type="project" value="UniProtKB-UniRule"/>
</dbReference>
<dbReference type="CDD" id="cd02655">
    <property type="entry name" value="RNAP_beta'_C"/>
    <property type="match status" value="1"/>
</dbReference>
<dbReference type="CDD" id="cd01609">
    <property type="entry name" value="RNAP_beta'_N"/>
    <property type="match status" value="1"/>
</dbReference>
<dbReference type="FunFam" id="1.10.150.390:FF:000002">
    <property type="entry name" value="DNA-directed RNA polymerase subunit beta"/>
    <property type="match status" value="1"/>
</dbReference>
<dbReference type="Gene3D" id="1.10.132.30">
    <property type="match status" value="1"/>
</dbReference>
<dbReference type="Gene3D" id="1.10.150.390">
    <property type="match status" value="1"/>
</dbReference>
<dbReference type="Gene3D" id="1.10.1790.20">
    <property type="match status" value="1"/>
</dbReference>
<dbReference type="Gene3D" id="1.10.40.90">
    <property type="match status" value="1"/>
</dbReference>
<dbReference type="Gene3D" id="2.40.40.20">
    <property type="match status" value="1"/>
</dbReference>
<dbReference type="Gene3D" id="2.40.50.100">
    <property type="match status" value="3"/>
</dbReference>
<dbReference type="Gene3D" id="4.10.860.120">
    <property type="entry name" value="RNA polymerase II, clamp domain"/>
    <property type="match status" value="1"/>
</dbReference>
<dbReference type="Gene3D" id="1.10.274.100">
    <property type="entry name" value="RNA polymerase Rpb1, domain 3"/>
    <property type="match status" value="1"/>
</dbReference>
<dbReference type="HAMAP" id="MF_01322">
    <property type="entry name" value="RNApol_bact_RpoC"/>
    <property type="match status" value="1"/>
</dbReference>
<dbReference type="InterPro" id="IPR045867">
    <property type="entry name" value="DNA-dir_RpoC_beta_prime"/>
</dbReference>
<dbReference type="InterPro" id="IPR012754">
    <property type="entry name" value="DNA-dir_RpoC_beta_prime_bact"/>
</dbReference>
<dbReference type="InterPro" id="IPR000722">
    <property type="entry name" value="RNA_pol_asu"/>
</dbReference>
<dbReference type="InterPro" id="IPR006592">
    <property type="entry name" value="RNA_pol_N"/>
</dbReference>
<dbReference type="InterPro" id="IPR007080">
    <property type="entry name" value="RNA_pol_Rpb1_1"/>
</dbReference>
<dbReference type="InterPro" id="IPR007066">
    <property type="entry name" value="RNA_pol_Rpb1_3"/>
</dbReference>
<dbReference type="InterPro" id="IPR042102">
    <property type="entry name" value="RNA_pol_Rpb1_3_sf"/>
</dbReference>
<dbReference type="InterPro" id="IPR007083">
    <property type="entry name" value="RNA_pol_Rpb1_4"/>
</dbReference>
<dbReference type="InterPro" id="IPR007081">
    <property type="entry name" value="RNA_pol_Rpb1_5"/>
</dbReference>
<dbReference type="InterPro" id="IPR044893">
    <property type="entry name" value="RNA_pol_Rpb1_clamp_domain"/>
</dbReference>
<dbReference type="InterPro" id="IPR038120">
    <property type="entry name" value="Rpb1_funnel_sf"/>
</dbReference>
<dbReference type="NCBIfam" id="TIGR02386">
    <property type="entry name" value="rpoC_TIGR"/>
    <property type="match status" value="1"/>
</dbReference>
<dbReference type="PANTHER" id="PTHR19376">
    <property type="entry name" value="DNA-DIRECTED RNA POLYMERASE"/>
    <property type="match status" value="1"/>
</dbReference>
<dbReference type="PANTHER" id="PTHR19376:SF54">
    <property type="entry name" value="DNA-DIRECTED RNA POLYMERASE SUBUNIT BETA"/>
    <property type="match status" value="1"/>
</dbReference>
<dbReference type="Pfam" id="PF04997">
    <property type="entry name" value="RNA_pol_Rpb1_1"/>
    <property type="match status" value="1"/>
</dbReference>
<dbReference type="Pfam" id="PF00623">
    <property type="entry name" value="RNA_pol_Rpb1_2"/>
    <property type="match status" value="2"/>
</dbReference>
<dbReference type="Pfam" id="PF04983">
    <property type="entry name" value="RNA_pol_Rpb1_3"/>
    <property type="match status" value="1"/>
</dbReference>
<dbReference type="Pfam" id="PF05000">
    <property type="entry name" value="RNA_pol_Rpb1_4"/>
    <property type="match status" value="1"/>
</dbReference>
<dbReference type="Pfam" id="PF04998">
    <property type="entry name" value="RNA_pol_Rpb1_5"/>
    <property type="match status" value="1"/>
</dbReference>
<dbReference type="SMART" id="SM00663">
    <property type="entry name" value="RPOLA_N"/>
    <property type="match status" value="1"/>
</dbReference>
<dbReference type="SUPFAM" id="SSF64484">
    <property type="entry name" value="beta and beta-prime subunits of DNA dependent RNA-polymerase"/>
    <property type="match status" value="1"/>
</dbReference>
<accession>Q9RH40</accession>
<accession>Q9RH38</accession>
<name>RPOC_RICCN</name>
<feature type="chain" id="PRO_0000067785" description="DNA-directed RNA polymerase subunit beta'">
    <location>
        <begin position="1"/>
        <end position="1372"/>
    </location>
</feature>
<feature type="binding site" evidence="1">
    <location>
        <position position="69"/>
    </location>
    <ligand>
        <name>Zn(2+)</name>
        <dbReference type="ChEBI" id="CHEBI:29105"/>
        <label>1</label>
    </ligand>
</feature>
<feature type="binding site" evidence="1">
    <location>
        <position position="71"/>
    </location>
    <ligand>
        <name>Zn(2+)</name>
        <dbReference type="ChEBI" id="CHEBI:29105"/>
        <label>1</label>
    </ligand>
</feature>
<feature type="binding site" evidence="1">
    <location>
        <position position="84"/>
    </location>
    <ligand>
        <name>Zn(2+)</name>
        <dbReference type="ChEBI" id="CHEBI:29105"/>
        <label>1</label>
    </ligand>
</feature>
<feature type="binding site" evidence="1">
    <location>
        <position position="87"/>
    </location>
    <ligand>
        <name>Zn(2+)</name>
        <dbReference type="ChEBI" id="CHEBI:29105"/>
        <label>1</label>
    </ligand>
</feature>
<feature type="binding site" evidence="1">
    <location>
        <position position="460"/>
    </location>
    <ligand>
        <name>Mg(2+)</name>
        <dbReference type="ChEBI" id="CHEBI:18420"/>
    </ligand>
</feature>
<feature type="binding site" evidence="1">
    <location>
        <position position="462"/>
    </location>
    <ligand>
        <name>Mg(2+)</name>
        <dbReference type="ChEBI" id="CHEBI:18420"/>
    </ligand>
</feature>
<feature type="binding site" evidence="1">
    <location>
        <position position="464"/>
    </location>
    <ligand>
        <name>Mg(2+)</name>
        <dbReference type="ChEBI" id="CHEBI:18420"/>
    </ligand>
</feature>
<feature type="binding site" evidence="1">
    <location>
        <position position="808"/>
    </location>
    <ligand>
        <name>Zn(2+)</name>
        <dbReference type="ChEBI" id="CHEBI:29105"/>
        <label>2</label>
    </ligand>
</feature>
<feature type="binding site" evidence="1">
    <location>
        <position position="882"/>
    </location>
    <ligand>
        <name>Zn(2+)</name>
        <dbReference type="ChEBI" id="CHEBI:29105"/>
        <label>2</label>
    </ligand>
</feature>
<feature type="binding site" evidence="1">
    <location>
        <position position="889"/>
    </location>
    <ligand>
        <name>Zn(2+)</name>
        <dbReference type="ChEBI" id="CHEBI:29105"/>
        <label>2</label>
    </ligand>
</feature>
<feature type="binding site" evidence="1">
    <location>
        <position position="892"/>
    </location>
    <ligand>
        <name>Zn(2+)</name>
        <dbReference type="ChEBI" id="CHEBI:29105"/>
        <label>2</label>
    </ligand>
</feature>
<feature type="sequence conflict" description="In Ref. 2; AAF22434." evidence="2" ref="2">
    <original>R</original>
    <variation>K</variation>
    <location>
        <position position="100"/>
    </location>
</feature>
<evidence type="ECO:0000255" key="1">
    <source>
        <dbReference type="HAMAP-Rule" id="MF_01322"/>
    </source>
</evidence>
<evidence type="ECO:0000305" key="2"/>
<proteinExistence type="inferred from homology"/>